<sequence length="32" mass="3524">APCTYPGQQCKSDDECCHGTCKTAFIGRICMR</sequence>
<evidence type="ECO:0000250" key="1"/>
<evidence type="ECO:0000255" key="2"/>
<evidence type="ECO:0000269" key="3">
    <source ref="1"/>
</evidence>
<evidence type="ECO:0000305" key="4"/>
<protein>
    <recommendedName>
        <fullName>U21-ctenitoxin-Co1a</fullName>
        <shortName>U21-CNTX-Co1a</shortName>
    </recommendedName>
    <alternativeName>
        <fullName>Venom peptide Oct F25-6</fullName>
    </alternativeName>
</protein>
<feature type="peptide" id="PRO_0000262764" description="U21-ctenitoxin-Co1a">
    <location>
        <begin position="1"/>
        <end position="32"/>
    </location>
</feature>
<feature type="disulfide bond" evidence="1">
    <location>
        <begin position="3"/>
        <end position="17"/>
    </location>
</feature>
<feature type="disulfide bond" evidence="1">
    <location>
        <begin position="10"/>
        <end position="21"/>
    </location>
</feature>
<feature type="disulfide bond" evidence="1">
    <location>
        <begin position="16"/>
        <end position="30"/>
    </location>
</feature>
<dbReference type="SMR" id="P85032"/>
<dbReference type="ArachnoServer" id="AS000041">
    <property type="toxin name" value="U21-ctenitoxin-Co1a"/>
</dbReference>
<dbReference type="GO" id="GO:0005576">
    <property type="term" value="C:extracellular region"/>
    <property type="evidence" value="ECO:0007669"/>
    <property type="project" value="UniProtKB-SubCell"/>
</dbReference>
<dbReference type="InterPro" id="IPR012634">
    <property type="entry name" value="Toxin_29"/>
</dbReference>
<dbReference type="Pfam" id="PF08116">
    <property type="entry name" value="Toxin_29"/>
    <property type="match status" value="1"/>
</dbReference>
<comment type="function">
    <text evidence="3">Not toxic to mice by intracerebroventricular injection.</text>
</comment>
<comment type="subcellular location">
    <subcellularLocation>
        <location evidence="3">Secreted</location>
    </subcellularLocation>
</comment>
<comment type="tissue specificity">
    <text evidence="3">Expressed by the venom gland.</text>
</comment>
<comment type="domain">
    <text evidence="1">The presence of a 'disulfide through disulfide knot' structurally defines this protein as a knottin.</text>
</comment>
<comment type="mass spectrometry" mass="3517.74" error="0.01" method="Electrospray" evidence="3"/>
<comment type="similarity">
    <text evidence="2">Belongs to the neurotoxin 17 (21C2) family.</text>
</comment>
<organism>
    <name type="scientific">Ctenus ornatus</name>
    <name type="common">Brazilian spider</name>
    <name type="synonym">Oligoctenus ornatus</name>
    <dbReference type="NCBI Taxonomy" id="406443"/>
    <lineage>
        <taxon>Eukaryota</taxon>
        <taxon>Metazoa</taxon>
        <taxon>Ecdysozoa</taxon>
        <taxon>Arthropoda</taxon>
        <taxon>Chelicerata</taxon>
        <taxon>Arachnida</taxon>
        <taxon>Araneae</taxon>
        <taxon>Araneomorphae</taxon>
        <taxon>Entelegynae</taxon>
        <taxon>Lycosoidea</taxon>
        <taxon>Ctenidae</taxon>
        <taxon>Oligoctenus</taxon>
    </lineage>
</organism>
<reference evidence="4" key="1">
    <citation type="submission" date="2006-10" db="UniProtKB">
        <title>New 3.5kDa peptide from venom of Brazilian spider Oligoctenus ornatus has strong sequence similarities to neurotoxins from the genus Phoneutria and various conotoxins.</title>
        <authorList>
            <person name="Richardson M."/>
            <person name="Goncalves J.M."/>
            <person name="Oliveira C.F.B."/>
            <person name="Borges M.H."/>
            <person name="Bemquerer M.P."/>
            <person name="Rates B.A."/>
            <person name="Pimenta A.M.C."/>
            <person name="Cordeiro M.N."/>
        </authorList>
    </citation>
    <scope>PROTEIN SEQUENCE</scope>
    <scope>SUBCELLULAR LOCATION</scope>
    <scope>TISSUE SPECIFICITY</scope>
    <scope>MASS SPECTROMETRY</scope>
    <source>
        <tissue evidence="3">Venom</tissue>
    </source>
</reference>
<accession>P85032</accession>
<keyword id="KW-0903">Direct protein sequencing</keyword>
<keyword id="KW-1015">Disulfide bond</keyword>
<keyword id="KW-0960">Knottin</keyword>
<keyword id="KW-0964">Secreted</keyword>
<proteinExistence type="evidence at protein level"/>
<name>F256_CTEON</name>